<gene>
    <name evidence="1" type="primary">groES</name>
    <name evidence="1" type="synonym">groS</name>
    <name type="ordered locus">Sputcn32_0700</name>
</gene>
<comment type="function">
    <text evidence="1">Together with the chaperonin GroEL, plays an essential role in assisting protein folding. The GroEL-GroES system forms a nano-cage that allows encapsulation of the non-native substrate proteins and provides a physical environment optimized to promote and accelerate protein folding. GroES binds to the apical surface of the GroEL ring, thereby capping the opening of the GroEL channel.</text>
</comment>
<comment type="subunit">
    <text evidence="1">Heptamer of 7 subunits arranged in a ring. Interacts with the chaperonin GroEL.</text>
</comment>
<comment type="subcellular location">
    <subcellularLocation>
        <location evidence="1">Cytoplasm</location>
    </subcellularLocation>
</comment>
<comment type="similarity">
    <text evidence="1">Belongs to the GroES chaperonin family.</text>
</comment>
<protein>
    <recommendedName>
        <fullName evidence="1">Co-chaperonin GroES</fullName>
    </recommendedName>
    <alternativeName>
        <fullName evidence="1">10 kDa chaperonin</fullName>
    </alternativeName>
    <alternativeName>
        <fullName evidence="1">Chaperonin-10</fullName>
        <shortName evidence="1">Cpn10</shortName>
    </alternativeName>
</protein>
<reference key="1">
    <citation type="submission" date="2007-04" db="EMBL/GenBank/DDBJ databases">
        <title>Complete sequence of Shewanella putrefaciens CN-32.</title>
        <authorList>
            <consortium name="US DOE Joint Genome Institute"/>
            <person name="Copeland A."/>
            <person name="Lucas S."/>
            <person name="Lapidus A."/>
            <person name="Barry K."/>
            <person name="Detter J.C."/>
            <person name="Glavina del Rio T."/>
            <person name="Hammon N."/>
            <person name="Israni S."/>
            <person name="Dalin E."/>
            <person name="Tice H."/>
            <person name="Pitluck S."/>
            <person name="Chain P."/>
            <person name="Malfatti S."/>
            <person name="Shin M."/>
            <person name="Vergez L."/>
            <person name="Schmutz J."/>
            <person name="Larimer F."/>
            <person name="Land M."/>
            <person name="Hauser L."/>
            <person name="Kyrpides N."/>
            <person name="Mikhailova N."/>
            <person name="Romine M.F."/>
            <person name="Fredrickson J."/>
            <person name="Tiedje J."/>
            <person name="Richardson P."/>
        </authorList>
    </citation>
    <scope>NUCLEOTIDE SEQUENCE [LARGE SCALE GENOMIC DNA]</scope>
    <source>
        <strain>CN-32 / ATCC BAA-453</strain>
    </source>
</reference>
<keyword id="KW-0143">Chaperone</keyword>
<keyword id="KW-0963">Cytoplasm</keyword>
<organism>
    <name type="scientific">Shewanella putrefaciens (strain CN-32 / ATCC BAA-453)</name>
    <dbReference type="NCBI Taxonomy" id="319224"/>
    <lineage>
        <taxon>Bacteria</taxon>
        <taxon>Pseudomonadati</taxon>
        <taxon>Pseudomonadota</taxon>
        <taxon>Gammaproteobacteria</taxon>
        <taxon>Alteromonadales</taxon>
        <taxon>Shewanellaceae</taxon>
        <taxon>Shewanella</taxon>
    </lineage>
</organism>
<accession>A4Y397</accession>
<evidence type="ECO:0000255" key="1">
    <source>
        <dbReference type="HAMAP-Rule" id="MF_00580"/>
    </source>
</evidence>
<sequence>MNIRPLHDRVIVKRLEVESTSAGGIVLTGSAAEKSTRGEILAVGNGRILENGTVKPLDVKVGDVVIFNEGYGVKKEKIDGQEVLILSEADLMAVVG</sequence>
<name>CH10_SHEPC</name>
<proteinExistence type="inferred from homology"/>
<dbReference type="EMBL" id="CP000681">
    <property type="protein sequence ID" value="ABP74430.1"/>
    <property type="molecule type" value="Genomic_DNA"/>
</dbReference>
<dbReference type="SMR" id="A4Y397"/>
<dbReference type="STRING" id="319224.Sputcn32_0700"/>
<dbReference type="KEGG" id="spc:Sputcn32_0700"/>
<dbReference type="eggNOG" id="COG0234">
    <property type="taxonomic scope" value="Bacteria"/>
</dbReference>
<dbReference type="HOGENOM" id="CLU_132825_1_1_6"/>
<dbReference type="GO" id="GO:0005737">
    <property type="term" value="C:cytoplasm"/>
    <property type="evidence" value="ECO:0007669"/>
    <property type="project" value="UniProtKB-SubCell"/>
</dbReference>
<dbReference type="GO" id="GO:0005524">
    <property type="term" value="F:ATP binding"/>
    <property type="evidence" value="ECO:0007669"/>
    <property type="project" value="InterPro"/>
</dbReference>
<dbReference type="GO" id="GO:0046872">
    <property type="term" value="F:metal ion binding"/>
    <property type="evidence" value="ECO:0007669"/>
    <property type="project" value="TreeGrafter"/>
</dbReference>
<dbReference type="GO" id="GO:0044183">
    <property type="term" value="F:protein folding chaperone"/>
    <property type="evidence" value="ECO:0007669"/>
    <property type="project" value="InterPro"/>
</dbReference>
<dbReference type="GO" id="GO:0051087">
    <property type="term" value="F:protein-folding chaperone binding"/>
    <property type="evidence" value="ECO:0007669"/>
    <property type="project" value="TreeGrafter"/>
</dbReference>
<dbReference type="GO" id="GO:0051082">
    <property type="term" value="F:unfolded protein binding"/>
    <property type="evidence" value="ECO:0007669"/>
    <property type="project" value="TreeGrafter"/>
</dbReference>
<dbReference type="GO" id="GO:0051085">
    <property type="term" value="P:chaperone cofactor-dependent protein refolding"/>
    <property type="evidence" value="ECO:0007669"/>
    <property type="project" value="TreeGrafter"/>
</dbReference>
<dbReference type="CDD" id="cd00320">
    <property type="entry name" value="cpn10"/>
    <property type="match status" value="1"/>
</dbReference>
<dbReference type="FunFam" id="2.30.33.40:FF:000001">
    <property type="entry name" value="10 kDa chaperonin"/>
    <property type="match status" value="1"/>
</dbReference>
<dbReference type="Gene3D" id="2.30.33.40">
    <property type="entry name" value="GroES chaperonin"/>
    <property type="match status" value="1"/>
</dbReference>
<dbReference type="HAMAP" id="MF_00580">
    <property type="entry name" value="CH10"/>
    <property type="match status" value="1"/>
</dbReference>
<dbReference type="InterPro" id="IPR020818">
    <property type="entry name" value="Chaperonin_GroES"/>
</dbReference>
<dbReference type="InterPro" id="IPR037124">
    <property type="entry name" value="Chaperonin_GroES_sf"/>
</dbReference>
<dbReference type="InterPro" id="IPR018369">
    <property type="entry name" value="Chaprnonin_Cpn10_CS"/>
</dbReference>
<dbReference type="InterPro" id="IPR011032">
    <property type="entry name" value="GroES-like_sf"/>
</dbReference>
<dbReference type="NCBIfam" id="NF001526">
    <property type="entry name" value="PRK00364.1-1"/>
    <property type="match status" value="1"/>
</dbReference>
<dbReference type="NCBIfam" id="NF001527">
    <property type="entry name" value="PRK00364.1-2"/>
    <property type="match status" value="1"/>
</dbReference>
<dbReference type="NCBIfam" id="NF001531">
    <property type="entry name" value="PRK00364.2-2"/>
    <property type="match status" value="1"/>
</dbReference>
<dbReference type="PANTHER" id="PTHR10772">
    <property type="entry name" value="10 KDA HEAT SHOCK PROTEIN"/>
    <property type="match status" value="1"/>
</dbReference>
<dbReference type="PANTHER" id="PTHR10772:SF58">
    <property type="entry name" value="CO-CHAPERONIN GROES"/>
    <property type="match status" value="1"/>
</dbReference>
<dbReference type="Pfam" id="PF00166">
    <property type="entry name" value="Cpn10"/>
    <property type="match status" value="1"/>
</dbReference>
<dbReference type="PRINTS" id="PR00297">
    <property type="entry name" value="CHAPERONIN10"/>
</dbReference>
<dbReference type="SMART" id="SM00883">
    <property type="entry name" value="Cpn10"/>
    <property type="match status" value="1"/>
</dbReference>
<dbReference type="SUPFAM" id="SSF50129">
    <property type="entry name" value="GroES-like"/>
    <property type="match status" value="1"/>
</dbReference>
<dbReference type="PROSITE" id="PS00681">
    <property type="entry name" value="CHAPERONINS_CPN10"/>
    <property type="match status" value="1"/>
</dbReference>
<feature type="chain" id="PRO_1000025364" description="Co-chaperonin GroES">
    <location>
        <begin position="1"/>
        <end position="96"/>
    </location>
</feature>